<organism>
    <name type="scientific">Rickettsia bellii (strain OSU 85-389)</name>
    <dbReference type="NCBI Taxonomy" id="391896"/>
    <lineage>
        <taxon>Bacteria</taxon>
        <taxon>Pseudomonadati</taxon>
        <taxon>Pseudomonadota</taxon>
        <taxon>Alphaproteobacteria</taxon>
        <taxon>Rickettsiales</taxon>
        <taxon>Rickettsiaceae</taxon>
        <taxon>Rickettsieae</taxon>
        <taxon>Rickettsia</taxon>
        <taxon>belli group</taxon>
    </lineage>
</organism>
<feature type="chain" id="PRO_1000213918" description="Acyl carrier protein">
    <location>
        <begin position="1"/>
        <end position="81"/>
    </location>
</feature>
<feature type="domain" description="Carrier" evidence="2">
    <location>
        <begin position="2"/>
        <end position="80"/>
    </location>
</feature>
<feature type="modified residue" description="O-(pantetheine 4'-phosphoryl)serine" evidence="2">
    <location>
        <position position="40"/>
    </location>
</feature>
<reference key="1">
    <citation type="submission" date="2007-09" db="EMBL/GenBank/DDBJ databases">
        <title>Complete genome sequencing of Rickettsia bellii.</title>
        <authorList>
            <person name="Madan A."/>
            <person name="Lee H."/>
            <person name="Madan A."/>
            <person name="Yoon J.-G."/>
            <person name="Ryu G.-Y."/>
            <person name="Dasch G."/>
            <person name="Ereemeva M."/>
        </authorList>
    </citation>
    <scope>NUCLEOTIDE SEQUENCE [LARGE SCALE GENOMIC DNA]</scope>
    <source>
        <strain>OSU 85-389</strain>
    </source>
</reference>
<gene>
    <name evidence="1" type="primary">acpP</name>
    <name type="ordered locus">A1I_07355</name>
</gene>
<protein>
    <recommendedName>
        <fullName evidence="1">Acyl carrier protein</fullName>
        <shortName evidence="1">ACP</shortName>
    </recommendedName>
</protein>
<sequence length="81" mass="9165">MSKVDNIEQKVIKIIADNQGKKIEEISVDLRFAEDLGVDSLSTVEIMMEIEKEFGVDVPDEEATKIKKVADVVNYIKEHKS</sequence>
<dbReference type="EMBL" id="CP000849">
    <property type="protein sequence ID" value="ABV79769.1"/>
    <property type="molecule type" value="Genomic_DNA"/>
</dbReference>
<dbReference type="SMR" id="A8GY19"/>
<dbReference type="KEGG" id="rbo:A1I_07355"/>
<dbReference type="HOGENOM" id="CLU_108696_5_1_5"/>
<dbReference type="UniPathway" id="UPA00094"/>
<dbReference type="GO" id="GO:0005737">
    <property type="term" value="C:cytoplasm"/>
    <property type="evidence" value="ECO:0007669"/>
    <property type="project" value="UniProtKB-SubCell"/>
</dbReference>
<dbReference type="GO" id="GO:0000035">
    <property type="term" value="F:acyl binding"/>
    <property type="evidence" value="ECO:0007669"/>
    <property type="project" value="TreeGrafter"/>
</dbReference>
<dbReference type="GO" id="GO:0000036">
    <property type="term" value="F:acyl carrier activity"/>
    <property type="evidence" value="ECO:0007669"/>
    <property type="project" value="UniProtKB-UniRule"/>
</dbReference>
<dbReference type="Gene3D" id="1.10.1200.10">
    <property type="entry name" value="ACP-like"/>
    <property type="match status" value="1"/>
</dbReference>
<dbReference type="HAMAP" id="MF_01217">
    <property type="entry name" value="Acyl_carrier"/>
    <property type="match status" value="1"/>
</dbReference>
<dbReference type="InterPro" id="IPR003231">
    <property type="entry name" value="ACP"/>
</dbReference>
<dbReference type="InterPro" id="IPR036736">
    <property type="entry name" value="ACP-like_sf"/>
</dbReference>
<dbReference type="InterPro" id="IPR009081">
    <property type="entry name" value="PP-bd_ACP"/>
</dbReference>
<dbReference type="NCBIfam" id="TIGR00517">
    <property type="entry name" value="acyl_carrier"/>
    <property type="match status" value="1"/>
</dbReference>
<dbReference type="NCBIfam" id="NF002148">
    <property type="entry name" value="PRK00982.1-2"/>
    <property type="match status" value="1"/>
</dbReference>
<dbReference type="NCBIfam" id="NF002150">
    <property type="entry name" value="PRK00982.1-4"/>
    <property type="match status" value="1"/>
</dbReference>
<dbReference type="PANTHER" id="PTHR20863">
    <property type="entry name" value="ACYL CARRIER PROTEIN"/>
    <property type="match status" value="1"/>
</dbReference>
<dbReference type="PANTHER" id="PTHR20863:SF76">
    <property type="entry name" value="CARRIER DOMAIN-CONTAINING PROTEIN"/>
    <property type="match status" value="1"/>
</dbReference>
<dbReference type="Pfam" id="PF00550">
    <property type="entry name" value="PP-binding"/>
    <property type="match status" value="1"/>
</dbReference>
<dbReference type="SUPFAM" id="SSF47336">
    <property type="entry name" value="ACP-like"/>
    <property type="match status" value="1"/>
</dbReference>
<dbReference type="PROSITE" id="PS50075">
    <property type="entry name" value="CARRIER"/>
    <property type="match status" value="1"/>
</dbReference>
<accession>A8GY19</accession>
<comment type="function">
    <text evidence="1">Carrier of the growing fatty acid chain in fatty acid biosynthesis.</text>
</comment>
<comment type="pathway">
    <text evidence="1">Lipid metabolism; fatty acid biosynthesis.</text>
</comment>
<comment type="subcellular location">
    <subcellularLocation>
        <location evidence="1">Cytoplasm</location>
    </subcellularLocation>
</comment>
<comment type="PTM">
    <text evidence="1">4'-phosphopantetheine is transferred from CoA to a specific serine of apo-ACP by AcpS. This modification is essential for activity because fatty acids are bound in thioester linkage to the sulfhydryl of the prosthetic group.</text>
</comment>
<comment type="similarity">
    <text evidence="1">Belongs to the acyl carrier protein (ACP) family.</text>
</comment>
<name>ACP_RICB8</name>
<evidence type="ECO:0000255" key="1">
    <source>
        <dbReference type="HAMAP-Rule" id="MF_01217"/>
    </source>
</evidence>
<evidence type="ECO:0000255" key="2">
    <source>
        <dbReference type="PROSITE-ProRule" id="PRU00258"/>
    </source>
</evidence>
<keyword id="KW-0963">Cytoplasm</keyword>
<keyword id="KW-0275">Fatty acid biosynthesis</keyword>
<keyword id="KW-0276">Fatty acid metabolism</keyword>
<keyword id="KW-0444">Lipid biosynthesis</keyword>
<keyword id="KW-0443">Lipid metabolism</keyword>
<keyword id="KW-0596">Phosphopantetheine</keyword>
<keyword id="KW-0597">Phosphoprotein</keyword>
<proteinExistence type="inferred from homology"/>